<comment type="function">
    <text evidence="1 2">S100A8 is a calcium- and zinc-binding protein which plays a prominent role in the regulation of inflammatory processes and immune response. It can induce neutrophil chemotaxis and adhesion. Predominantly found as calprotectin (S100A8/A9) which has a wide plethora of intra- and extracellular functions. The intracellular functions include: facilitating leukocyte arachidonic acid trafficking and metabolism, modulation of the tubulin-dependent cytoskeleton during migration of phagocytes and activation of the neutrophilic NADPH-oxidase. Also participates in regulatory T-cell differentiation together with CD69. Activates NADPH-oxidase by facilitating the enzyme complex assembly at the cell membrane, transferring arachidonic acid, an essential cofactor, to the enzyme complex and S100A8 contributes to the enzyme assembly by directly binding to NCF2/P67PHOX. The extracellular functions involve pro-inflammatory, antimicrobial, oxidant-scavenging and apoptosis-inducing activities. Its pro-inflammatory activity includes recruitment of leukocytes, promotion of cytokine and chemokine production, and regulation of leukocyte adhesion and migration. Acts as an alarmin or a danger associated molecular pattern (DAMP) molecule and stimulates innate immune cells via binding to pattern recognition receptors such as Toll-like receptor 4 (TLR4) and receptor for advanced glycation endproducts (AGER). Binding to TLR4 and AGER activates the MAP-kinase and NF-kappa-B signaling pathways resulting in the amplification of the pro-inflammatory cascade. Has antimicrobial activity towards bacteria and fungi and exerts its antimicrobial activity probably via chelation of Zn(2+) which is essential for microbial growth. Can induce cell death via autophagy and apoptosis and this occurs through the cross-talk of mitochondria and lysosomes via reactive oxygen species (ROS) and the process involves BNIP3. Can regulate neutrophil number and apoptosis by an anti-apoptotic effect; regulates cell survival via ITGAM/ITGB and TLR4 and a signaling mechanism involving MEK-ERK. Its role as an oxidant scavenger has a protective role in preventing exaggerated tissue damage by scavenging oxidants (By similarity). The iNOS-S100A8/A9 transnitrosylase complex is proposed to direct selective inflammatory stimulus-dependent S-nitrosylation of multiple targets such as GAPDH, ANXA5, EZR, MSN and VIM by recognizing a [IL]-x-C-x-x-[DE] motif; S100A8 seems to contribute to S-nitrosylation site selectivity (By similarity).</text>
</comment>
<comment type="subunit">
    <text evidence="1 2">Homodimer. Preferentially exists as a heterodimer or heterotetramer with S100A9 known as calprotectin (S100A8/A9). S100A8 interacts with AGER, ATP2A2 and with the heterodimeric complex formed by TLR4 and LY96. Calprotectin (S100A8/9) interacts with CEACAM3 and tubulin filaments in a calcium-dependent manner. Heterotetrameric calprotectin (S100A8/A9) interacts with ANXA6 and associates with tubulin filaments in activated monocytes. S100A8 and calprotectin (S100A8/9) interact with NCF2/P67PHOX, RAC1 and RAC2. Calprotectin (S100A8/9) interacts with CYBA and CYBB (By similarity). Calprotectin (S100A8/9) interacts with NOS2 to form the iNOS-S100A8/A9 transnitrosylase complex (By similarity). Calprotectin (S100A8/9) interacts with CD69 (By similarity).</text>
</comment>
<comment type="subcellular location">
    <subcellularLocation>
        <location evidence="1">Secreted</location>
    </subcellularLocation>
    <subcellularLocation>
        <location evidence="1">Cytoplasm</location>
    </subcellularLocation>
    <subcellularLocation>
        <location evidence="1">Cytoplasm</location>
        <location evidence="1">Cytoskeleton</location>
    </subcellularLocation>
    <subcellularLocation>
        <location evidence="1">Cell membrane</location>
        <topology evidence="1">Peripheral membrane protein</topology>
    </subcellularLocation>
    <text evidence="1">Predominantly localized in the cytoplasm. Upon elevation of the intracellular calcium level, translocated from the cytoplasm to the cytoskeleton and the cell membrane. Upon neutrophil activation or endothelial adhesion of monocytes, is secreted via a microtubule-mediated, alternative pathway (By similarity).</text>
</comment>
<comment type="tissue specificity">
    <text>Found essentially in phagocytic cells.</text>
</comment>
<comment type="miscellaneous">
    <text evidence="1">Binds two calcium ions per molecule with an affinity similar to that of the S100 proteins.</text>
</comment>
<comment type="similarity">
    <text evidence="4">Belongs to the S-100 family.</text>
</comment>
<proteinExistence type="evidence at protein level"/>
<protein>
    <recommendedName>
        <fullName>Protein S100-A8</fullName>
    </recommendedName>
    <alternativeName>
        <fullName>BEE11</fullName>
    </alternativeName>
    <alternativeName>
        <fullName>Calgranulin-A</fullName>
    </alternativeName>
    <alternativeName>
        <fullName>Neutrophil cytosolic 7 kDa protein</fullName>
        <shortName>P7</shortName>
    </alternativeName>
    <alternativeName>
        <fullName>S100 calcium-binding protein A8</fullName>
    </alternativeName>
</protein>
<organism>
    <name type="scientific">Bos taurus</name>
    <name type="common">Bovine</name>
    <dbReference type="NCBI Taxonomy" id="9913"/>
    <lineage>
        <taxon>Eukaryota</taxon>
        <taxon>Metazoa</taxon>
        <taxon>Chordata</taxon>
        <taxon>Craniata</taxon>
        <taxon>Vertebrata</taxon>
        <taxon>Euteleostomi</taxon>
        <taxon>Mammalia</taxon>
        <taxon>Eutheria</taxon>
        <taxon>Laurasiatheria</taxon>
        <taxon>Artiodactyla</taxon>
        <taxon>Ruminantia</taxon>
        <taxon>Pecora</taxon>
        <taxon>Bovidae</taxon>
        <taxon>Bovinae</taxon>
        <taxon>Bos</taxon>
    </lineage>
</organism>
<dbReference type="EMBL" id="BC111678">
    <property type="protein sequence ID" value="AAI11679.1"/>
    <property type="molecule type" value="mRNA"/>
</dbReference>
<dbReference type="PIR" id="B42628">
    <property type="entry name" value="B42628"/>
</dbReference>
<dbReference type="RefSeq" id="NP_001107197.1">
    <property type="nucleotide sequence ID" value="NM_001113725.2"/>
</dbReference>
<dbReference type="SMR" id="P28782"/>
<dbReference type="FunCoup" id="P28782">
    <property type="interactions" value="129"/>
</dbReference>
<dbReference type="STRING" id="9913.ENSBTAP00000074498"/>
<dbReference type="SwissPalm" id="P28782"/>
<dbReference type="PaxDb" id="9913-ENSBTAP00000016774"/>
<dbReference type="PeptideAtlas" id="P28782"/>
<dbReference type="GeneID" id="616818"/>
<dbReference type="KEGG" id="bta:616818"/>
<dbReference type="CTD" id="6279"/>
<dbReference type="VEuPathDB" id="HostDB:ENSBTAG00000012640"/>
<dbReference type="eggNOG" id="ENOG502SA01">
    <property type="taxonomic scope" value="Eukaryota"/>
</dbReference>
<dbReference type="HOGENOM" id="CLU_138624_6_0_1"/>
<dbReference type="InParanoid" id="P28782"/>
<dbReference type="OMA" id="NYHAIYR"/>
<dbReference type="OrthoDB" id="26525at2759"/>
<dbReference type="TreeFam" id="TF332727"/>
<dbReference type="Reactome" id="R-BTA-5668599">
    <property type="pathway name" value="RHO GTPases Activate NADPH Oxidases"/>
</dbReference>
<dbReference type="Reactome" id="R-BTA-5686938">
    <property type="pathway name" value="Regulation of TLR by endogenous ligand"/>
</dbReference>
<dbReference type="Reactome" id="R-BTA-6798695">
    <property type="pathway name" value="Neutrophil degranulation"/>
</dbReference>
<dbReference type="Reactome" id="R-BTA-6799990">
    <property type="pathway name" value="Metal sequestration by antimicrobial proteins"/>
</dbReference>
<dbReference type="Proteomes" id="UP000009136">
    <property type="component" value="Chromosome 3"/>
</dbReference>
<dbReference type="Bgee" id="ENSBTAG00000012640">
    <property type="expression patterns" value="Expressed in anterior segment of eyeball and 92 other cell types or tissues"/>
</dbReference>
<dbReference type="GO" id="GO:1990660">
    <property type="term" value="C:calprotectin complex"/>
    <property type="evidence" value="ECO:0007669"/>
    <property type="project" value="Ensembl"/>
</dbReference>
<dbReference type="GO" id="GO:0005737">
    <property type="term" value="C:cytoplasm"/>
    <property type="evidence" value="ECO:0000318"/>
    <property type="project" value="GO_Central"/>
</dbReference>
<dbReference type="GO" id="GO:0005829">
    <property type="term" value="C:cytosol"/>
    <property type="evidence" value="ECO:0007669"/>
    <property type="project" value="Ensembl"/>
</dbReference>
<dbReference type="GO" id="GO:0005615">
    <property type="term" value="C:extracellular space"/>
    <property type="evidence" value="ECO:0007669"/>
    <property type="project" value="Ensembl"/>
</dbReference>
<dbReference type="GO" id="GO:0045111">
    <property type="term" value="C:intermediate filament cytoskeleton"/>
    <property type="evidence" value="ECO:0007669"/>
    <property type="project" value="Ensembl"/>
</dbReference>
<dbReference type="GO" id="GO:0005886">
    <property type="term" value="C:plasma membrane"/>
    <property type="evidence" value="ECO:0007669"/>
    <property type="project" value="UniProtKB-SubCell"/>
</dbReference>
<dbReference type="GO" id="GO:1990661">
    <property type="term" value="C:S100A8 complex"/>
    <property type="evidence" value="ECO:0007669"/>
    <property type="project" value="Ensembl"/>
</dbReference>
<dbReference type="GO" id="GO:0016209">
    <property type="term" value="F:antioxidant activity"/>
    <property type="evidence" value="ECO:0007669"/>
    <property type="project" value="UniProtKB-KW"/>
</dbReference>
<dbReference type="GO" id="GO:0005509">
    <property type="term" value="F:calcium ion binding"/>
    <property type="evidence" value="ECO:0000318"/>
    <property type="project" value="GO_Central"/>
</dbReference>
<dbReference type="GO" id="GO:0048306">
    <property type="term" value="F:calcium-dependent protein binding"/>
    <property type="evidence" value="ECO:0000318"/>
    <property type="project" value="GO_Central"/>
</dbReference>
<dbReference type="GO" id="GO:0006915">
    <property type="term" value="P:apoptotic process"/>
    <property type="evidence" value="ECO:0007669"/>
    <property type="project" value="UniProtKB-KW"/>
</dbReference>
<dbReference type="GO" id="GO:0014002">
    <property type="term" value="P:astrocyte development"/>
    <property type="evidence" value="ECO:0007669"/>
    <property type="project" value="Ensembl"/>
</dbReference>
<dbReference type="GO" id="GO:0006914">
    <property type="term" value="P:autophagy"/>
    <property type="evidence" value="ECO:0000250"/>
    <property type="project" value="UniProtKB"/>
</dbReference>
<dbReference type="GO" id="GO:0043542">
    <property type="term" value="P:endothelial cell migration"/>
    <property type="evidence" value="ECO:0000318"/>
    <property type="project" value="GO_Central"/>
</dbReference>
<dbReference type="GO" id="GO:0045087">
    <property type="term" value="P:innate immune response"/>
    <property type="evidence" value="ECO:0007669"/>
    <property type="project" value="UniProtKB-KW"/>
</dbReference>
<dbReference type="GO" id="GO:0002523">
    <property type="term" value="P:leukocyte migration involved in inflammatory response"/>
    <property type="evidence" value="ECO:0000250"/>
    <property type="project" value="UniProtKB"/>
</dbReference>
<dbReference type="GO" id="GO:0070488">
    <property type="term" value="P:neutrophil aggregation"/>
    <property type="evidence" value="ECO:0000250"/>
    <property type="project" value="UniProtKB"/>
</dbReference>
<dbReference type="GO" id="GO:0030593">
    <property type="term" value="P:neutrophil chemotaxis"/>
    <property type="evidence" value="ECO:0000250"/>
    <property type="project" value="UniProtKB"/>
</dbReference>
<dbReference type="GO" id="GO:0002790">
    <property type="term" value="P:peptide secretion"/>
    <property type="evidence" value="ECO:0007669"/>
    <property type="project" value="Ensembl"/>
</dbReference>
<dbReference type="GO" id="GO:0050729">
    <property type="term" value="P:positive regulation of inflammatory response"/>
    <property type="evidence" value="ECO:0000250"/>
    <property type="project" value="UniProtKB"/>
</dbReference>
<dbReference type="GO" id="GO:2001244">
    <property type="term" value="P:positive regulation of intrinsic apoptotic signaling pathway"/>
    <property type="evidence" value="ECO:0000250"/>
    <property type="project" value="UniProtKB"/>
</dbReference>
<dbReference type="GO" id="GO:0002793">
    <property type="term" value="P:positive regulation of peptide secretion"/>
    <property type="evidence" value="ECO:0007669"/>
    <property type="project" value="Ensembl"/>
</dbReference>
<dbReference type="GO" id="GO:0032496">
    <property type="term" value="P:response to lipopolysaccharide"/>
    <property type="evidence" value="ECO:0000318"/>
    <property type="project" value="GO_Central"/>
</dbReference>
<dbReference type="CDD" id="cd05030">
    <property type="entry name" value="calgranulins"/>
    <property type="match status" value="1"/>
</dbReference>
<dbReference type="FunFam" id="1.10.238.10:FF:000344">
    <property type="entry name" value="Protein S100-A8"/>
    <property type="match status" value="1"/>
</dbReference>
<dbReference type="Gene3D" id="1.10.238.10">
    <property type="entry name" value="EF-hand"/>
    <property type="match status" value="1"/>
</dbReference>
<dbReference type="InterPro" id="IPR011992">
    <property type="entry name" value="EF-hand-dom_pair"/>
</dbReference>
<dbReference type="InterPro" id="IPR002048">
    <property type="entry name" value="EF_hand_dom"/>
</dbReference>
<dbReference type="InterPro" id="IPR001751">
    <property type="entry name" value="S100/CaBP7/8-like_CS"/>
</dbReference>
<dbReference type="InterPro" id="IPR013787">
    <property type="entry name" value="S100_Ca-bd_sub"/>
</dbReference>
<dbReference type="PANTHER" id="PTHR11639:SF5">
    <property type="entry name" value="PROTEIN S100-A8"/>
    <property type="match status" value="1"/>
</dbReference>
<dbReference type="PANTHER" id="PTHR11639">
    <property type="entry name" value="S100 CALCIUM-BINDING PROTEIN"/>
    <property type="match status" value="1"/>
</dbReference>
<dbReference type="Pfam" id="PF00036">
    <property type="entry name" value="EF-hand_1"/>
    <property type="match status" value="1"/>
</dbReference>
<dbReference type="Pfam" id="PF01023">
    <property type="entry name" value="S_100"/>
    <property type="match status" value="1"/>
</dbReference>
<dbReference type="SMART" id="SM00054">
    <property type="entry name" value="EFh"/>
    <property type="match status" value="1"/>
</dbReference>
<dbReference type="SMART" id="SM01394">
    <property type="entry name" value="S_100"/>
    <property type="match status" value="1"/>
</dbReference>
<dbReference type="SUPFAM" id="SSF47473">
    <property type="entry name" value="EF-hand"/>
    <property type="match status" value="1"/>
</dbReference>
<dbReference type="PROSITE" id="PS50222">
    <property type="entry name" value="EF_HAND_2"/>
    <property type="match status" value="1"/>
</dbReference>
<dbReference type="PROSITE" id="PS00303">
    <property type="entry name" value="S100_CABP"/>
    <property type="match status" value="1"/>
</dbReference>
<accession>P28782</accession>
<accession>Q2NKR8</accession>
<sequence length="89" mass="10460">MLTDLECAINSLIDVYHKYSLKKGNYHAVYRDDLKQLLETECPKFMKKKDADTWFKELDINQDGGINFEEFLVLVIKVGLEAHEEIHKE</sequence>
<reference key="1">
    <citation type="submission" date="2006-01" db="EMBL/GenBank/DDBJ databases">
        <authorList>
            <consortium name="NIH - Mammalian Gene Collection (MGC) project"/>
        </authorList>
    </citation>
    <scope>NUCLEOTIDE SEQUENCE [LARGE SCALE MRNA]</scope>
    <source>
        <strain>Hereford</strain>
        <tissue>Heart ventricle</tissue>
    </source>
</reference>
<reference key="2">
    <citation type="journal article" date="1992" name="Biochemistry">
        <title>The 23-kilodalton protein, a substrate of protein kinase C, in bovine neutrophil cytosol is a member of the S100 family.</title>
        <authorList>
            <person name="Dianoux A.-C."/>
            <person name="Stasia M.-J."/>
            <person name="Garin J."/>
            <person name="Gagnon J."/>
            <person name="Vignais P.V."/>
        </authorList>
    </citation>
    <scope>PROTEIN SEQUENCE OF 1-41</scope>
    <source>
        <tissue>Neutrophil</tissue>
    </source>
</reference>
<reference key="3">
    <citation type="journal article" date="1993" name="J. Cell Sci.">
        <title>Nuclear proteins of the bovine esophageal epithelium. I. Monoclonal antibody W2 specifically reacts with condensed nuclei of differentiated superficial cells.</title>
        <authorList>
            <person name="Tang T.K."/>
            <person name="Hong T.-M."/>
            <person name="Lin C.-Y."/>
            <person name="Lai M.-L."/>
            <person name="Liu C.H.L."/>
            <person name="Lo H.-J."/>
            <person name="Wang M.-E."/>
            <person name="Chen L.B."/>
            <person name="Chen W.-T."/>
            <person name="Ip W."/>
            <person name="Lin D.C."/>
            <person name="Lin J.J.-C."/>
            <person name="Lin S."/>
            <person name="Sun T.-T."/>
            <person name="Wang E."/>
            <person name="Wang J.L."/>
            <person name="Wu R."/>
            <person name="Wu C.-W."/>
            <person name="Chien S."/>
        </authorList>
    </citation>
    <scope>PROTEIN SEQUENCE OF 1-29</scope>
    <source>
        <tissue>Esophageal epithelium</tissue>
    </source>
</reference>
<gene>
    <name type="primary">S100A8</name>
</gene>
<keyword id="KW-0929">Antimicrobial</keyword>
<keyword id="KW-0049">Antioxidant</keyword>
<keyword id="KW-0053">Apoptosis</keyword>
<keyword id="KW-0072">Autophagy</keyword>
<keyword id="KW-0106">Calcium</keyword>
<keyword id="KW-1003">Cell membrane</keyword>
<keyword id="KW-0145">Chemotaxis</keyword>
<keyword id="KW-0963">Cytoplasm</keyword>
<keyword id="KW-0206">Cytoskeleton</keyword>
<keyword id="KW-0903">Direct protein sequencing</keyword>
<keyword id="KW-0391">Immunity</keyword>
<keyword id="KW-0395">Inflammatory response</keyword>
<keyword id="KW-0399">Innate immunity</keyword>
<keyword id="KW-0472">Membrane</keyword>
<keyword id="KW-0479">Metal-binding</keyword>
<keyword id="KW-1185">Reference proteome</keyword>
<keyword id="KW-0677">Repeat</keyword>
<keyword id="KW-0702">S-nitrosylation</keyword>
<keyword id="KW-0964">Secreted</keyword>
<keyword id="KW-0862">Zinc</keyword>
<name>S10A8_BOVIN</name>
<evidence type="ECO:0000250" key="1"/>
<evidence type="ECO:0000250" key="2">
    <source>
        <dbReference type="UniProtKB" id="P05109"/>
    </source>
</evidence>
<evidence type="ECO:0000255" key="3">
    <source>
        <dbReference type="PROSITE-ProRule" id="PRU00448"/>
    </source>
</evidence>
<evidence type="ECO:0000305" key="4"/>
<feature type="chain" id="PRO_0000143992" description="Protein S100-A8">
    <location>
        <begin position="1"/>
        <end position="89"/>
    </location>
</feature>
<feature type="domain" description="EF-hand 1" evidence="4">
    <location>
        <begin position="12"/>
        <end position="47"/>
    </location>
</feature>
<feature type="domain" description="EF-hand 2" evidence="3">
    <location>
        <begin position="46"/>
        <end position="81"/>
    </location>
</feature>
<feature type="binding site" evidence="1">
    <location>
        <position position="17"/>
    </location>
    <ligand>
        <name>Zn(2+)</name>
        <dbReference type="ChEBI" id="CHEBI:29105"/>
    </ligand>
</feature>
<feature type="binding site" evidence="1">
    <location>
        <position position="27"/>
    </location>
    <ligand>
        <name>Zn(2+)</name>
        <dbReference type="ChEBI" id="CHEBI:29105"/>
    </ligand>
</feature>
<feature type="binding site" evidence="4">
    <location>
        <position position="33"/>
    </location>
    <ligand>
        <name>Ca(2+)</name>
        <dbReference type="ChEBI" id="CHEBI:29108"/>
        <label>1</label>
        <note>low affinity</note>
    </ligand>
</feature>
<feature type="binding site" evidence="4">
    <location>
        <position position="59"/>
    </location>
    <ligand>
        <name>Ca(2+)</name>
        <dbReference type="ChEBI" id="CHEBI:29108"/>
        <label>2</label>
        <note>high affinity</note>
    </ligand>
</feature>
<feature type="binding site" evidence="4">
    <location>
        <position position="61"/>
    </location>
    <ligand>
        <name>Ca(2+)</name>
        <dbReference type="ChEBI" id="CHEBI:29108"/>
        <label>2</label>
        <note>high affinity</note>
    </ligand>
</feature>
<feature type="binding site" evidence="4">
    <location>
        <position position="63"/>
    </location>
    <ligand>
        <name>Ca(2+)</name>
        <dbReference type="ChEBI" id="CHEBI:29108"/>
        <label>2</label>
        <note>high affinity</note>
    </ligand>
</feature>
<feature type="binding site" evidence="4">
    <location>
        <position position="70"/>
    </location>
    <ligand>
        <name>Ca(2+)</name>
        <dbReference type="ChEBI" id="CHEBI:29108"/>
        <label>2</label>
        <note>high affinity</note>
    </ligand>
</feature>
<feature type="binding site" evidence="1">
    <location>
        <position position="83"/>
    </location>
    <ligand>
        <name>Zn(2+)</name>
        <dbReference type="ChEBI" id="CHEBI:29105"/>
    </ligand>
</feature>
<feature type="modified residue" description="S-nitrosocysteine" evidence="2">
    <location>
        <position position="42"/>
    </location>
</feature>
<feature type="sequence conflict" description="In Ref. 2; AA sequence." evidence="4" ref="2">
    <original>N</original>
    <variation>D</variation>
    <location>
        <position position="10"/>
    </location>
</feature>
<feature type="sequence conflict" description="In Ref. 3; AA sequence." evidence="4" ref="3">
    <original>S</original>
    <variation>I</variation>
    <location>
        <position position="11"/>
    </location>
</feature>